<gene>
    <name type="ordered locus">MIMI_L81</name>
</gene>
<organismHost>
    <name type="scientific">Acanthamoeba polyphaga</name>
    <name type="common">Amoeba</name>
    <dbReference type="NCBI Taxonomy" id="5757"/>
</organismHost>
<name>YL081_MIMIV</name>
<proteinExistence type="predicted"/>
<dbReference type="EMBL" id="AY653733">
    <property type="protein sequence ID" value="AAV50356.1"/>
    <property type="molecule type" value="Genomic_DNA"/>
</dbReference>
<dbReference type="SMR" id="Q5UPF3"/>
<dbReference type="Proteomes" id="UP000001134">
    <property type="component" value="Genome"/>
</dbReference>
<dbReference type="Gene3D" id="1.25.40.20">
    <property type="entry name" value="Ankyrin repeat-containing domain"/>
    <property type="match status" value="1"/>
</dbReference>
<dbReference type="InterPro" id="IPR050776">
    <property type="entry name" value="Ank_Repeat/CDKN_Inhibitor"/>
</dbReference>
<dbReference type="InterPro" id="IPR036770">
    <property type="entry name" value="Ankyrin_rpt-contain_sf"/>
</dbReference>
<dbReference type="PANTHER" id="PTHR24201">
    <property type="entry name" value="ANK_REP_REGION DOMAIN-CONTAINING PROTEIN"/>
    <property type="match status" value="1"/>
</dbReference>
<dbReference type="SUPFAM" id="SSF48403">
    <property type="entry name" value="Ankyrin repeat"/>
    <property type="match status" value="1"/>
</dbReference>
<dbReference type="PROSITE" id="PS50297">
    <property type="entry name" value="ANK_REP_REGION"/>
    <property type="match status" value="1"/>
</dbReference>
<feature type="chain" id="PRO_0000067147" description="Putative ankyrin repeat protein L81">
    <location>
        <begin position="1"/>
        <end position="277"/>
    </location>
</feature>
<feature type="repeat" description="ANK 1">
    <location>
        <begin position="150"/>
        <end position="179"/>
    </location>
</feature>
<feature type="repeat" description="ANK 2">
    <location>
        <begin position="183"/>
        <end position="215"/>
    </location>
</feature>
<keyword id="KW-0040">ANK repeat</keyword>
<keyword id="KW-1185">Reference proteome</keyword>
<keyword id="KW-0677">Repeat</keyword>
<reference key="1">
    <citation type="journal article" date="2004" name="Science">
        <title>The 1.2-megabase genome sequence of Mimivirus.</title>
        <authorList>
            <person name="Raoult D."/>
            <person name="Audic S."/>
            <person name="Robert C."/>
            <person name="Abergel C."/>
            <person name="Renesto P."/>
            <person name="Ogata H."/>
            <person name="La Scola B."/>
            <person name="Susan M."/>
            <person name="Claverie J.-M."/>
        </authorList>
    </citation>
    <scope>NUCLEOTIDE SEQUENCE [LARGE SCALE GENOMIC DNA]</scope>
    <source>
        <strain>Rowbotham-Bradford</strain>
    </source>
</reference>
<protein>
    <recommendedName>
        <fullName>Putative ankyrin repeat protein L81</fullName>
    </recommendedName>
</protein>
<sequence>MFVVHSMRLFTGASFRRNLMTSRRLSRKSCLSDSSTLEYSFSLYNKYCVTKKLKIKTICSFIYYYLTITISTIKNSTMSAKHLRPNITHIPVKRSYANILYFGRSAQLLETDRNAGWTKAHETACNGNLEDYEEEYKEMDKHEIDVRDGFGQTPMWIATTRCNYRNYVFLKKHGSDLHQKDYQGRSLLHATANAVNSECLDIFKDLIANGVDLYQKDMVGSTAIDELKHENSIINYETEGTLLVTNFFIFLYKFTYKFIKKLLTICYCIFSIHFFSL</sequence>
<organism>
    <name type="scientific">Acanthamoeba polyphaga mimivirus</name>
    <name type="common">APMV</name>
    <dbReference type="NCBI Taxonomy" id="212035"/>
    <lineage>
        <taxon>Viruses</taxon>
        <taxon>Varidnaviria</taxon>
        <taxon>Bamfordvirae</taxon>
        <taxon>Nucleocytoviricota</taxon>
        <taxon>Megaviricetes</taxon>
        <taxon>Imitervirales</taxon>
        <taxon>Mimiviridae</taxon>
        <taxon>Megamimivirinae</taxon>
        <taxon>Mimivirus</taxon>
        <taxon>Mimivirus bradfordmassiliense</taxon>
    </lineage>
</organism>
<accession>Q5UPF3</accession>